<feature type="chain" id="PRO_0000281686" description="ATP-dependent RNA helicase ded1">
    <location>
        <begin position="1"/>
        <end position="681"/>
    </location>
</feature>
<feature type="domain" description="Helicase ATP-binding" evidence="2">
    <location>
        <begin position="220"/>
        <end position="413"/>
    </location>
</feature>
<feature type="domain" description="Helicase C-terminal" evidence="3">
    <location>
        <begin position="424"/>
        <end position="585"/>
    </location>
</feature>
<feature type="region of interest" description="Disordered" evidence="4">
    <location>
        <begin position="1"/>
        <end position="144"/>
    </location>
</feature>
<feature type="region of interest" description="Disordered" evidence="4">
    <location>
        <begin position="586"/>
        <end position="619"/>
    </location>
</feature>
<feature type="region of interest" description="Disordered" evidence="4">
    <location>
        <begin position="661"/>
        <end position="681"/>
    </location>
</feature>
<feature type="short sequence motif" description="Q motif">
    <location>
        <begin position="189"/>
        <end position="217"/>
    </location>
</feature>
<feature type="short sequence motif" description="DEAD box">
    <location>
        <begin position="357"/>
        <end position="360"/>
    </location>
</feature>
<feature type="compositionally biased region" description="Low complexity" evidence="4">
    <location>
        <begin position="41"/>
        <end position="50"/>
    </location>
</feature>
<feature type="compositionally biased region" description="Polar residues" evidence="4">
    <location>
        <begin position="89"/>
        <end position="99"/>
    </location>
</feature>
<feature type="compositionally biased region" description="Gly residues" evidence="4">
    <location>
        <begin position="113"/>
        <end position="123"/>
    </location>
</feature>
<feature type="compositionally biased region" description="Gly residues" evidence="4">
    <location>
        <begin position="589"/>
        <end position="604"/>
    </location>
</feature>
<feature type="compositionally biased region" description="Low complexity" evidence="4">
    <location>
        <begin position="669"/>
        <end position="681"/>
    </location>
</feature>
<feature type="binding site" evidence="2">
    <location>
        <begin position="233"/>
        <end position="240"/>
    </location>
    <ligand>
        <name>ATP</name>
        <dbReference type="ChEBI" id="CHEBI:30616"/>
    </ligand>
</feature>
<organism>
    <name type="scientific">Aspergillus clavatus (strain ATCC 1007 / CBS 513.65 / DSM 816 / NCTC 3887 / NRRL 1 / QM 1276 / 107)</name>
    <dbReference type="NCBI Taxonomy" id="344612"/>
    <lineage>
        <taxon>Eukaryota</taxon>
        <taxon>Fungi</taxon>
        <taxon>Dikarya</taxon>
        <taxon>Ascomycota</taxon>
        <taxon>Pezizomycotina</taxon>
        <taxon>Eurotiomycetes</taxon>
        <taxon>Eurotiomycetidae</taxon>
        <taxon>Eurotiales</taxon>
        <taxon>Aspergillaceae</taxon>
        <taxon>Aspergillus</taxon>
        <taxon>Aspergillus subgen. Fumigati</taxon>
    </lineage>
</organism>
<reference key="1">
    <citation type="journal article" date="2008" name="PLoS Genet.">
        <title>Genomic islands in the pathogenic filamentous fungus Aspergillus fumigatus.</title>
        <authorList>
            <person name="Fedorova N.D."/>
            <person name="Khaldi N."/>
            <person name="Joardar V.S."/>
            <person name="Maiti R."/>
            <person name="Amedeo P."/>
            <person name="Anderson M.J."/>
            <person name="Crabtree J."/>
            <person name="Silva J.C."/>
            <person name="Badger J.H."/>
            <person name="Albarraq A."/>
            <person name="Angiuoli S."/>
            <person name="Bussey H."/>
            <person name="Bowyer P."/>
            <person name="Cotty P.J."/>
            <person name="Dyer P.S."/>
            <person name="Egan A."/>
            <person name="Galens K."/>
            <person name="Fraser-Liggett C.M."/>
            <person name="Haas B.J."/>
            <person name="Inman J.M."/>
            <person name="Kent R."/>
            <person name="Lemieux S."/>
            <person name="Malavazi I."/>
            <person name="Orvis J."/>
            <person name="Roemer T."/>
            <person name="Ronning C.M."/>
            <person name="Sundaram J.P."/>
            <person name="Sutton G."/>
            <person name="Turner G."/>
            <person name="Venter J.C."/>
            <person name="White O.R."/>
            <person name="Whitty B.R."/>
            <person name="Youngman P."/>
            <person name="Wolfe K.H."/>
            <person name="Goldman G.H."/>
            <person name="Wortman J.R."/>
            <person name="Jiang B."/>
            <person name="Denning D.W."/>
            <person name="Nierman W.C."/>
        </authorList>
    </citation>
    <scope>NUCLEOTIDE SEQUENCE [LARGE SCALE GENOMIC DNA]</scope>
    <source>
        <strain>ATCC 1007 / CBS 513.65 / DSM 816 / NCTC 3887 / NRRL 1 / QM 1276 / 107</strain>
    </source>
</reference>
<sequence>MADGLNMGNLSLNDSQHAPAGPGNTGRAAYIPPHLRGRAGGANVDAAAAAAPPPGPAAWNGPRQGAPPRGGNWANANASDFSPRAPSGPNGNNSWTPSEGQRRPFDPHAYGHPGHGGSYGGSQGASTRGSGDGQWRDGKHIPGPANARLERELFGVPNDPTKQSTGINFANYDDIPVEASGQDVPEPVNAFTNPPLDDHLISNIKLARYQTPTPVQKYSIPIVMNGRDLMACAQTGSGKTGGFLFPILSQAFQKGPSAVPAQASGQMSYGRQRKAYPTSLILAPTRELVSQIFDEARKFAYRSWVRPCVVYGGADIGSQLRQIERGCDLLVATPGRLVDLIERGRISLVNINYLVLDEADRMLDMGFEPQIRRIVEGEDMPSVNERQTLMFSATFPRDIQMLARDFLKDYVFLSVGRVGSTSENITQKVEYVEDVDKRSVLLDILHTHGTSGLTLIFVETKRMADALSDFLINQRFPATAIHGDRTQRERERALEMFRSARCPILVATAVAARGLDIPNVTHVINYDLPTDIDDYVHRIGRTGRAGNTGIATAFFNRGNRGVVRELIDLLKEAHQEVPSFLESIAREGSGYGGRGGRGGRGRGGNANRDVRRMGGAMGGGAPSFGGGSYGGPGGSYGGGSYGGGAAAPSYGGGYGGASGGGGSYGGSYGNPSGPTGPSSWW</sequence>
<gene>
    <name type="primary">ded1</name>
    <name type="ORF">ACLA_046980</name>
</gene>
<name>DED1_ASPCL</name>
<accession>A1CH78</accession>
<comment type="function">
    <text evidence="1">ATP-binding RNA helicase involved in translation initiation. Remodels RNA in response to ADP and ATP concentrations by facilitating disruption, but also formation of RNA duplexes (By similarity).</text>
</comment>
<comment type="catalytic activity">
    <reaction>
        <text>ATP + H2O = ADP + phosphate + H(+)</text>
        <dbReference type="Rhea" id="RHEA:13065"/>
        <dbReference type="ChEBI" id="CHEBI:15377"/>
        <dbReference type="ChEBI" id="CHEBI:15378"/>
        <dbReference type="ChEBI" id="CHEBI:30616"/>
        <dbReference type="ChEBI" id="CHEBI:43474"/>
        <dbReference type="ChEBI" id="CHEBI:456216"/>
        <dbReference type="EC" id="3.6.4.13"/>
    </reaction>
</comment>
<comment type="subcellular location">
    <subcellularLocation>
        <location evidence="1">Cytoplasm</location>
    </subcellularLocation>
</comment>
<comment type="domain">
    <text>The Q motif is unique to and characteristic of the DEAD box family of RNA helicases and controls ATP binding and hydrolysis.</text>
</comment>
<comment type="similarity">
    <text evidence="5">Belongs to the DEAD box helicase family. DDX3/DED1 subfamily.</text>
</comment>
<dbReference type="EC" id="3.6.4.13"/>
<dbReference type="EMBL" id="DS027054">
    <property type="protein sequence ID" value="EAW10233.1"/>
    <property type="molecule type" value="Genomic_DNA"/>
</dbReference>
<dbReference type="RefSeq" id="XP_001271659.1">
    <property type="nucleotide sequence ID" value="XM_001271658.1"/>
</dbReference>
<dbReference type="SMR" id="A1CH78"/>
<dbReference type="STRING" id="344612.A1CH78"/>
<dbReference type="EnsemblFungi" id="EAW10233">
    <property type="protein sequence ID" value="EAW10233"/>
    <property type="gene ID" value="ACLA_046980"/>
</dbReference>
<dbReference type="GeneID" id="4704355"/>
<dbReference type="KEGG" id="act:ACLA_046980"/>
<dbReference type="VEuPathDB" id="FungiDB:ACLA_046980"/>
<dbReference type="eggNOG" id="KOG0335">
    <property type="taxonomic scope" value="Eukaryota"/>
</dbReference>
<dbReference type="HOGENOM" id="CLU_003041_16_3_1"/>
<dbReference type="OMA" id="CYRSWVR"/>
<dbReference type="OrthoDB" id="196131at2759"/>
<dbReference type="Proteomes" id="UP000006701">
    <property type="component" value="Unassembled WGS sequence"/>
</dbReference>
<dbReference type="GO" id="GO:0010494">
    <property type="term" value="C:cytoplasmic stress granule"/>
    <property type="evidence" value="ECO:0007669"/>
    <property type="project" value="EnsemblFungi"/>
</dbReference>
<dbReference type="GO" id="GO:0005681">
    <property type="term" value="C:spliceosomal complex"/>
    <property type="evidence" value="ECO:0007669"/>
    <property type="project" value="EnsemblFungi"/>
</dbReference>
<dbReference type="GO" id="GO:0005524">
    <property type="term" value="F:ATP binding"/>
    <property type="evidence" value="ECO:0007669"/>
    <property type="project" value="UniProtKB-KW"/>
</dbReference>
<dbReference type="GO" id="GO:0016887">
    <property type="term" value="F:ATP hydrolysis activity"/>
    <property type="evidence" value="ECO:0007669"/>
    <property type="project" value="RHEA"/>
</dbReference>
<dbReference type="GO" id="GO:0031370">
    <property type="term" value="F:eukaryotic initiation factor 4G binding"/>
    <property type="evidence" value="ECO:0007669"/>
    <property type="project" value="EnsemblFungi"/>
</dbReference>
<dbReference type="GO" id="GO:0051880">
    <property type="term" value="F:G-quadruplex DNA binding"/>
    <property type="evidence" value="ECO:0007669"/>
    <property type="project" value="EnsemblFungi"/>
</dbReference>
<dbReference type="GO" id="GO:0002151">
    <property type="term" value="F:G-quadruplex RNA binding"/>
    <property type="evidence" value="ECO:0007669"/>
    <property type="project" value="EnsemblFungi"/>
</dbReference>
<dbReference type="GO" id="GO:0003729">
    <property type="term" value="F:mRNA binding"/>
    <property type="evidence" value="ECO:0007669"/>
    <property type="project" value="EnsemblFungi"/>
</dbReference>
<dbReference type="GO" id="GO:0003724">
    <property type="term" value="F:RNA helicase activity"/>
    <property type="evidence" value="ECO:0007669"/>
    <property type="project" value="UniProtKB-EC"/>
</dbReference>
<dbReference type="GO" id="GO:0033592">
    <property type="term" value="F:RNA strand annealing activity"/>
    <property type="evidence" value="ECO:0007669"/>
    <property type="project" value="EnsemblFungi"/>
</dbReference>
<dbReference type="GO" id="GO:0003743">
    <property type="term" value="F:translation initiation factor activity"/>
    <property type="evidence" value="ECO:0007669"/>
    <property type="project" value="UniProtKB-KW"/>
</dbReference>
<dbReference type="GO" id="GO:0002183">
    <property type="term" value="P:cytoplasmic translational initiation"/>
    <property type="evidence" value="ECO:0007669"/>
    <property type="project" value="EnsemblFungi"/>
</dbReference>
<dbReference type="GO" id="GO:1990625">
    <property type="term" value="P:negative regulation of cytoplasmic translational initiation in response to stress"/>
    <property type="evidence" value="ECO:0007669"/>
    <property type="project" value="EnsemblFungi"/>
</dbReference>
<dbReference type="GO" id="GO:1901195">
    <property type="term" value="P:positive regulation of formation of translation preinitiation complex"/>
    <property type="evidence" value="ECO:0007669"/>
    <property type="project" value="EnsemblFungi"/>
</dbReference>
<dbReference type="GO" id="GO:0031047">
    <property type="term" value="P:regulatory ncRNA-mediated gene silencing"/>
    <property type="evidence" value="ECO:0007669"/>
    <property type="project" value="EnsemblFungi"/>
</dbReference>
<dbReference type="GO" id="GO:0000390">
    <property type="term" value="P:spliceosomal complex disassembly"/>
    <property type="evidence" value="ECO:0007669"/>
    <property type="project" value="EnsemblFungi"/>
</dbReference>
<dbReference type="CDD" id="cd17967">
    <property type="entry name" value="DEADc_DDX3_DDX4"/>
    <property type="match status" value="1"/>
</dbReference>
<dbReference type="CDD" id="cd18787">
    <property type="entry name" value="SF2_C_DEAD"/>
    <property type="match status" value="1"/>
</dbReference>
<dbReference type="FunFam" id="3.40.50.300:FF:000160">
    <property type="entry name" value="ATP-dependent RNA helicase DDX3X"/>
    <property type="match status" value="1"/>
</dbReference>
<dbReference type="FunFam" id="3.40.50.300:FF:000008">
    <property type="entry name" value="ATP-dependent RNA helicase RhlB"/>
    <property type="match status" value="1"/>
</dbReference>
<dbReference type="Gene3D" id="3.40.50.300">
    <property type="entry name" value="P-loop containing nucleotide triphosphate hydrolases"/>
    <property type="match status" value="2"/>
</dbReference>
<dbReference type="InterPro" id="IPR011545">
    <property type="entry name" value="DEAD/DEAH_box_helicase_dom"/>
</dbReference>
<dbReference type="InterPro" id="IPR044763">
    <property type="entry name" value="Ded1/Dbp1_DEADc"/>
</dbReference>
<dbReference type="InterPro" id="IPR014001">
    <property type="entry name" value="Helicase_ATP-bd"/>
</dbReference>
<dbReference type="InterPro" id="IPR001650">
    <property type="entry name" value="Helicase_C-like"/>
</dbReference>
<dbReference type="InterPro" id="IPR027417">
    <property type="entry name" value="P-loop_NTPase"/>
</dbReference>
<dbReference type="InterPro" id="IPR000629">
    <property type="entry name" value="RNA-helicase_DEAD-box_CS"/>
</dbReference>
<dbReference type="InterPro" id="IPR014014">
    <property type="entry name" value="RNA_helicase_DEAD_Q_motif"/>
</dbReference>
<dbReference type="PANTHER" id="PTHR47958">
    <property type="entry name" value="ATP-DEPENDENT RNA HELICASE DBP3"/>
    <property type="match status" value="1"/>
</dbReference>
<dbReference type="Pfam" id="PF00270">
    <property type="entry name" value="DEAD"/>
    <property type="match status" value="1"/>
</dbReference>
<dbReference type="Pfam" id="PF00271">
    <property type="entry name" value="Helicase_C"/>
    <property type="match status" value="1"/>
</dbReference>
<dbReference type="SMART" id="SM00487">
    <property type="entry name" value="DEXDc"/>
    <property type="match status" value="1"/>
</dbReference>
<dbReference type="SMART" id="SM00490">
    <property type="entry name" value="HELICc"/>
    <property type="match status" value="1"/>
</dbReference>
<dbReference type="SUPFAM" id="SSF52540">
    <property type="entry name" value="P-loop containing nucleoside triphosphate hydrolases"/>
    <property type="match status" value="1"/>
</dbReference>
<dbReference type="PROSITE" id="PS00039">
    <property type="entry name" value="DEAD_ATP_HELICASE"/>
    <property type="match status" value="1"/>
</dbReference>
<dbReference type="PROSITE" id="PS51192">
    <property type="entry name" value="HELICASE_ATP_BIND_1"/>
    <property type="match status" value="1"/>
</dbReference>
<dbReference type="PROSITE" id="PS51194">
    <property type="entry name" value="HELICASE_CTER"/>
    <property type="match status" value="1"/>
</dbReference>
<dbReference type="PROSITE" id="PS51195">
    <property type="entry name" value="Q_MOTIF"/>
    <property type="match status" value="1"/>
</dbReference>
<evidence type="ECO:0000250" key="1"/>
<evidence type="ECO:0000255" key="2">
    <source>
        <dbReference type="PROSITE-ProRule" id="PRU00541"/>
    </source>
</evidence>
<evidence type="ECO:0000255" key="3">
    <source>
        <dbReference type="PROSITE-ProRule" id="PRU00542"/>
    </source>
</evidence>
<evidence type="ECO:0000256" key="4">
    <source>
        <dbReference type="SAM" id="MobiDB-lite"/>
    </source>
</evidence>
<evidence type="ECO:0000305" key="5"/>
<keyword id="KW-0067">ATP-binding</keyword>
<keyword id="KW-0963">Cytoplasm</keyword>
<keyword id="KW-0347">Helicase</keyword>
<keyword id="KW-0378">Hydrolase</keyword>
<keyword id="KW-0396">Initiation factor</keyword>
<keyword id="KW-0547">Nucleotide-binding</keyword>
<keyword id="KW-0648">Protein biosynthesis</keyword>
<keyword id="KW-1185">Reference proteome</keyword>
<keyword id="KW-0694">RNA-binding</keyword>
<proteinExistence type="inferred from homology"/>
<protein>
    <recommendedName>
        <fullName>ATP-dependent RNA helicase ded1</fullName>
        <ecNumber>3.6.4.13</ecNumber>
    </recommendedName>
</protein>